<protein>
    <recommendedName>
        <fullName evidence="1">Glycine--tRNA ligase alpha subunit</fullName>
        <ecNumber evidence="1">6.1.1.14</ecNumber>
    </recommendedName>
    <alternativeName>
        <fullName evidence="1">Glycyl-tRNA synthetase alpha subunit</fullName>
        <shortName evidence="1">GlyRS</shortName>
    </alternativeName>
</protein>
<evidence type="ECO:0000255" key="1">
    <source>
        <dbReference type="HAMAP-Rule" id="MF_00254"/>
    </source>
</evidence>
<sequence length="294" mass="33606">MLTFSDMLLKLQQFWAEQGCNIVQPYDIPAGAGTFHPATLLRSLDSKPWAAAYVAPSRRPTDGRYGENPNRLGAYYQFQALIKPSPDNIQELYLKSLEYLGLNLKEHDIRFVEDNWESPTLGAWGLGWEVWLDGMEVTQFTYFQQVGGIACDPVAVEITYGTERLAMYLQGVESVFDIVWNRNGDEVTTYADVHKESEYEFSKYHFEVATVEKLFQHFEDASNECKLCLEVGLPLPAYDQCMIASHAFNVLDARKAISQAQRQNYILKVRELSIGCAQLYKAQEEERNQRVRGT</sequence>
<accession>A6Q760</accession>
<reference key="1">
    <citation type="journal article" date="2007" name="Proc. Natl. Acad. Sci. U.S.A.">
        <title>Deep-sea vent epsilon-proteobacterial genomes provide insights into emergence of pathogens.</title>
        <authorList>
            <person name="Nakagawa S."/>
            <person name="Takaki Y."/>
            <person name="Shimamura S."/>
            <person name="Reysenbach A.-L."/>
            <person name="Takai K."/>
            <person name="Horikoshi K."/>
        </authorList>
    </citation>
    <scope>NUCLEOTIDE SEQUENCE [LARGE SCALE GENOMIC DNA]</scope>
    <source>
        <strain>NBC37-1</strain>
    </source>
</reference>
<organism>
    <name type="scientific">Sulfurovum sp. (strain NBC37-1)</name>
    <dbReference type="NCBI Taxonomy" id="387093"/>
    <lineage>
        <taxon>Bacteria</taxon>
        <taxon>Pseudomonadati</taxon>
        <taxon>Campylobacterota</taxon>
        <taxon>Epsilonproteobacteria</taxon>
        <taxon>Campylobacterales</taxon>
        <taxon>Sulfurovaceae</taxon>
        <taxon>Sulfurovum</taxon>
    </lineage>
</organism>
<keyword id="KW-0030">Aminoacyl-tRNA synthetase</keyword>
<keyword id="KW-0067">ATP-binding</keyword>
<keyword id="KW-0963">Cytoplasm</keyword>
<keyword id="KW-0436">Ligase</keyword>
<keyword id="KW-0547">Nucleotide-binding</keyword>
<keyword id="KW-0648">Protein biosynthesis</keyword>
<gene>
    <name evidence="1" type="primary">glyQ</name>
    <name type="ordered locus">SUN_0359</name>
</gene>
<dbReference type="EC" id="6.1.1.14" evidence="1"/>
<dbReference type="EMBL" id="AP009179">
    <property type="protein sequence ID" value="BAF71319.1"/>
    <property type="molecule type" value="Genomic_DNA"/>
</dbReference>
<dbReference type="RefSeq" id="WP_011980052.1">
    <property type="nucleotide sequence ID" value="NC_009663.1"/>
</dbReference>
<dbReference type="SMR" id="A6Q760"/>
<dbReference type="STRING" id="387093.SUN_0359"/>
<dbReference type="KEGG" id="sun:SUN_0359"/>
<dbReference type="eggNOG" id="COG0752">
    <property type="taxonomic scope" value="Bacteria"/>
</dbReference>
<dbReference type="HOGENOM" id="CLU_057066_1_0_7"/>
<dbReference type="OrthoDB" id="9802183at2"/>
<dbReference type="Proteomes" id="UP000006378">
    <property type="component" value="Chromosome"/>
</dbReference>
<dbReference type="GO" id="GO:0005829">
    <property type="term" value="C:cytosol"/>
    <property type="evidence" value="ECO:0007669"/>
    <property type="project" value="TreeGrafter"/>
</dbReference>
<dbReference type="GO" id="GO:0005524">
    <property type="term" value="F:ATP binding"/>
    <property type="evidence" value="ECO:0007669"/>
    <property type="project" value="UniProtKB-UniRule"/>
</dbReference>
<dbReference type="GO" id="GO:0004820">
    <property type="term" value="F:glycine-tRNA ligase activity"/>
    <property type="evidence" value="ECO:0007669"/>
    <property type="project" value="UniProtKB-UniRule"/>
</dbReference>
<dbReference type="GO" id="GO:0006426">
    <property type="term" value="P:glycyl-tRNA aminoacylation"/>
    <property type="evidence" value="ECO:0007669"/>
    <property type="project" value="UniProtKB-UniRule"/>
</dbReference>
<dbReference type="CDD" id="cd00733">
    <property type="entry name" value="GlyRS_alpha_core"/>
    <property type="match status" value="1"/>
</dbReference>
<dbReference type="FunFam" id="3.30.930.10:FF:000006">
    <property type="entry name" value="Glycine--tRNA ligase alpha subunit"/>
    <property type="match status" value="1"/>
</dbReference>
<dbReference type="Gene3D" id="3.30.930.10">
    <property type="entry name" value="Bira Bifunctional Protein, Domain 2"/>
    <property type="match status" value="1"/>
</dbReference>
<dbReference type="Gene3D" id="1.20.58.180">
    <property type="entry name" value="Class II aaRS and biotin synthetases, domain 2"/>
    <property type="match status" value="1"/>
</dbReference>
<dbReference type="HAMAP" id="MF_00254">
    <property type="entry name" value="Gly_tRNA_synth_alpha"/>
    <property type="match status" value="1"/>
</dbReference>
<dbReference type="InterPro" id="IPR045864">
    <property type="entry name" value="aa-tRNA-synth_II/BPL/LPL"/>
</dbReference>
<dbReference type="InterPro" id="IPR006194">
    <property type="entry name" value="Gly-tRNA-synth_heterodimer"/>
</dbReference>
<dbReference type="InterPro" id="IPR002310">
    <property type="entry name" value="Gly-tRNA_ligase_asu"/>
</dbReference>
<dbReference type="NCBIfam" id="TIGR00388">
    <property type="entry name" value="glyQ"/>
    <property type="match status" value="1"/>
</dbReference>
<dbReference type="NCBIfam" id="NF006827">
    <property type="entry name" value="PRK09348.1"/>
    <property type="match status" value="1"/>
</dbReference>
<dbReference type="PANTHER" id="PTHR30075:SF2">
    <property type="entry name" value="GLYCINE--TRNA LIGASE, CHLOROPLASTIC_MITOCHONDRIAL 2"/>
    <property type="match status" value="1"/>
</dbReference>
<dbReference type="PANTHER" id="PTHR30075">
    <property type="entry name" value="GLYCYL-TRNA SYNTHETASE"/>
    <property type="match status" value="1"/>
</dbReference>
<dbReference type="Pfam" id="PF02091">
    <property type="entry name" value="tRNA-synt_2e"/>
    <property type="match status" value="1"/>
</dbReference>
<dbReference type="PRINTS" id="PR01044">
    <property type="entry name" value="TRNASYNTHGA"/>
</dbReference>
<dbReference type="SUPFAM" id="SSF55681">
    <property type="entry name" value="Class II aaRS and biotin synthetases"/>
    <property type="match status" value="1"/>
</dbReference>
<dbReference type="PROSITE" id="PS50861">
    <property type="entry name" value="AA_TRNA_LIGASE_II_GLYAB"/>
    <property type="match status" value="1"/>
</dbReference>
<name>SYGA_SULNB</name>
<proteinExistence type="inferred from homology"/>
<feature type="chain" id="PRO_1000047512" description="Glycine--tRNA ligase alpha subunit">
    <location>
        <begin position="1"/>
        <end position="294"/>
    </location>
</feature>
<comment type="catalytic activity">
    <reaction evidence="1">
        <text>tRNA(Gly) + glycine + ATP = glycyl-tRNA(Gly) + AMP + diphosphate</text>
        <dbReference type="Rhea" id="RHEA:16013"/>
        <dbReference type="Rhea" id="RHEA-COMP:9664"/>
        <dbReference type="Rhea" id="RHEA-COMP:9683"/>
        <dbReference type="ChEBI" id="CHEBI:30616"/>
        <dbReference type="ChEBI" id="CHEBI:33019"/>
        <dbReference type="ChEBI" id="CHEBI:57305"/>
        <dbReference type="ChEBI" id="CHEBI:78442"/>
        <dbReference type="ChEBI" id="CHEBI:78522"/>
        <dbReference type="ChEBI" id="CHEBI:456215"/>
        <dbReference type="EC" id="6.1.1.14"/>
    </reaction>
</comment>
<comment type="subunit">
    <text evidence="1">Tetramer of two alpha and two beta subunits.</text>
</comment>
<comment type="subcellular location">
    <subcellularLocation>
        <location evidence="1">Cytoplasm</location>
    </subcellularLocation>
</comment>
<comment type="similarity">
    <text evidence="1">Belongs to the class-II aminoacyl-tRNA synthetase family.</text>
</comment>